<sequence>MAVVLRLSRAGTHKAPFYHVVATDSRNARDGKYLEDVGIYDPTKRPERIELKVERIEHWLKAGAKPSQTVAMILKRAAKAAAPAAPKA</sequence>
<accession>B8J890</accession>
<name>RS16_ANAD2</name>
<proteinExistence type="inferred from homology"/>
<keyword id="KW-0687">Ribonucleoprotein</keyword>
<keyword id="KW-0689">Ribosomal protein</keyword>
<protein>
    <recommendedName>
        <fullName evidence="1">Small ribosomal subunit protein bS16</fullName>
    </recommendedName>
    <alternativeName>
        <fullName evidence="2">30S ribosomal protein S16</fullName>
    </alternativeName>
</protein>
<comment type="similarity">
    <text evidence="1">Belongs to the bacterial ribosomal protein bS16 family.</text>
</comment>
<feature type="chain" id="PRO_1000196322" description="Small ribosomal subunit protein bS16">
    <location>
        <begin position="1"/>
        <end position="88"/>
    </location>
</feature>
<gene>
    <name evidence="1" type="primary">rpsP</name>
    <name type="ordered locus">A2cp1_2048</name>
</gene>
<organism>
    <name type="scientific">Anaeromyxobacter dehalogenans (strain 2CP-1 / ATCC BAA-258)</name>
    <dbReference type="NCBI Taxonomy" id="455488"/>
    <lineage>
        <taxon>Bacteria</taxon>
        <taxon>Pseudomonadati</taxon>
        <taxon>Myxococcota</taxon>
        <taxon>Myxococcia</taxon>
        <taxon>Myxococcales</taxon>
        <taxon>Cystobacterineae</taxon>
        <taxon>Anaeromyxobacteraceae</taxon>
        <taxon>Anaeromyxobacter</taxon>
    </lineage>
</organism>
<dbReference type="EMBL" id="CP001359">
    <property type="protein sequence ID" value="ACL65389.1"/>
    <property type="molecule type" value="Genomic_DNA"/>
</dbReference>
<dbReference type="RefSeq" id="WP_011420970.1">
    <property type="nucleotide sequence ID" value="NC_011891.1"/>
</dbReference>
<dbReference type="SMR" id="B8J890"/>
<dbReference type="KEGG" id="acp:A2cp1_2048"/>
<dbReference type="HOGENOM" id="CLU_100590_5_1_7"/>
<dbReference type="Proteomes" id="UP000007089">
    <property type="component" value="Chromosome"/>
</dbReference>
<dbReference type="GO" id="GO:0005737">
    <property type="term" value="C:cytoplasm"/>
    <property type="evidence" value="ECO:0007669"/>
    <property type="project" value="UniProtKB-ARBA"/>
</dbReference>
<dbReference type="GO" id="GO:0015935">
    <property type="term" value="C:small ribosomal subunit"/>
    <property type="evidence" value="ECO:0007669"/>
    <property type="project" value="TreeGrafter"/>
</dbReference>
<dbReference type="GO" id="GO:0003735">
    <property type="term" value="F:structural constituent of ribosome"/>
    <property type="evidence" value="ECO:0007669"/>
    <property type="project" value="InterPro"/>
</dbReference>
<dbReference type="GO" id="GO:0006412">
    <property type="term" value="P:translation"/>
    <property type="evidence" value="ECO:0007669"/>
    <property type="project" value="UniProtKB-UniRule"/>
</dbReference>
<dbReference type="Gene3D" id="3.30.1320.10">
    <property type="match status" value="1"/>
</dbReference>
<dbReference type="HAMAP" id="MF_00385">
    <property type="entry name" value="Ribosomal_bS16"/>
    <property type="match status" value="1"/>
</dbReference>
<dbReference type="InterPro" id="IPR000307">
    <property type="entry name" value="Ribosomal_bS16"/>
</dbReference>
<dbReference type="InterPro" id="IPR023803">
    <property type="entry name" value="Ribosomal_bS16_dom_sf"/>
</dbReference>
<dbReference type="NCBIfam" id="TIGR00002">
    <property type="entry name" value="S16"/>
    <property type="match status" value="1"/>
</dbReference>
<dbReference type="PANTHER" id="PTHR12919">
    <property type="entry name" value="30S RIBOSOMAL PROTEIN S16"/>
    <property type="match status" value="1"/>
</dbReference>
<dbReference type="PANTHER" id="PTHR12919:SF20">
    <property type="entry name" value="SMALL RIBOSOMAL SUBUNIT PROTEIN BS16M"/>
    <property type="match status" value="1"/>
</dbReference>
<dbReference type="Pfam" id="PF00886">
    <property type="entry name" value="Ribosomal_S16"/>
    <property type="match status" value="1"/>
</dbReference>
<dbReference type="SUPFAM" id="SSF54565">
    <property type="entry name" value="Ribosomal protein S16"/>
    <property type="match status" value="1"/>
</dbReference>
<evidence type="ECO:0000255" key="1">
    <source>
        <dbReference type="HAMAP-Rule" id="MF_00385"/>
    </source>
</evidence>
<evidence type="ECO:0000305" key="2"/>
<reference key="1">
    <citation type="submission" date="2009-01" db="EMBL/GenBank/DDBJ databases">
        <title>Complete sequence of Anaeromyxobacter dehalogenans 2CP-1.</title>
        <authorList>
            <person name="Lucas S."/>
            <person name="Copeland A."/>
            <person name="Lapidus A."/>
            <person name="Glavina del Rio T."/>
            <person name="Dalin E."/>
            <person name="Tice H."/>
            <person name="Bruce D."/>
            <person name="Goodwin L."/>
            <person name="Pitluck S."/>
            <person name="Saunders E."/>
            <person name="Brettin T."/>
            <person name="Detter J.C."/>
            <person name="Han C."/>
            <person name="Larimer F."/>
            <person name="Land M."/>
            <person name="Hauser L."/>
            <person name="Kyrpides N."/>
            <person name="Ovchinnikova G."/>
            <person name="Beliaev A.S."/>
            <person name="Richardson P."/>
        </authorList>
    </citation>
    <scope>NUCLEOTIDE SEQUENCE [LARGE SCALE GENOMIC DNA]</scope>
    <source>
        <strain>2CP-1 / ATCC BAA-258</strain>
    </source>
</reference>